<accession>F4JP52</accession>
<accession>F4JP50</accession>
<accession>O23583</accession>
<accession>O23584</accession>
<accession>Q0WV36</accession>
<keyword id="KW-0025">Alternative splicing</keyword>
<keyword id="KW-0479">Metal-binding</keyword>
<keyword id="KW-0539">Nucleus</keyword>
<keyword id="KW-0597">Phosphoprotein</keyword>
<keyword id="KW-1185">Reference proteome</keyword>
<keyword id="KW-0346">Stress response</keyword>
<keyword id="KW-0808">Transferase</keyword>
<keyword id="KW-0833">Ubl conjugation pathway</keyword>
<keyword id="KW-0862">Zinc</keyword>
<keyword id="KW-0863">Zinc-finger</keyword>
<feature type="chain" id="PRO_0000438583" description="E3 ubiquitin ligase PARAQUAT TOLERANCE 3">
    <location>
        <begin position="1"/>
        <end position="826"/>
    </location>
</feature>
<feature type="domain" description="DWNN" evidence="4">
    <location>
        <begin position="3"/>
        <end position="76"/>
    </location>
</feature>
<feature type="zinc finger region" description="CCHC-type" evidence="2">
    <location>
        <begin position="203"/>
        <end position="216"/>
    </location>
</feature>
<feature type="zinc finger region" description="RING-type; degenerate" evidence="3">
    <location>
        <begin position="288"/>
        <end position="326"/>
    </location>
</feature>
<feature type="region of interest" description="Disordered" evidence="6">
    <location>
        <begin position="356"/>
        <end position="406"/>
    </location>
</feature>
<feature type="region of interest" description="Disordered" evidence="6">
    <location>
        <begin position="435"/>
        <end position="488"/>
    </location>
</feature>
<feature type="region of interest" description="Disordered" evidence="6">
    <location>
        <begin position="585"/>
        <end position="826"/>
    </location>
</feature>
<feature type="short sequence motif" description="Nuclear localization signal 1" evidence="5">
    <location>
        <begin position="668"/>
        <end position="675"/>
    </location>
</feature>
<feature type="short sequence motif" description="Nuclear localization signal 2" evidence="5">
    <location>
        <begin position="695"/>
        <end position="702"/>
    </location>
</feature>
<feature type="compositionally biased region" description="Polar residues" evidence="6">
    <location>
        <begin position="356"/>
        <end position="365"/>
    </location>
</feature>
<feature type="compositionally biased region" description="Polar residues" evidence="6">
    <location>
        <begin position="396"/>
        <end position="406"/>
    </location>
</feature>
<feature type="compositionally biased region" description="Polar residues" evidence="6">
    <location>
        <begin position="435"/>
        <end position="454"/>
    </location>
</feature>
<feature type="compositionally biased region" description="Basic and acidic residues" evidence="6">
    <location>
        <begin position="588"/>
        <end position="624"/>
    </location>
</feature>
<feature type="compositionally biased region" description="Polar residues" evidence="6">
    <location>
        <begin position="625"/>
        <end position="635"/>
    </location>
</feature>
<feature type="compositionally biased region" description="Basic and acidic residues" evidence="6">
    <location>
        <begin position="651"/>
        <end position="667"/>
    </location>
</feature>
<feature type="compositionally biased region" description="Basic and acidic residues" evidence="6">
    <location>
        <begin position="680"/>
        <end position="706"/>
    </location>
</feature>
<feature type="compositionally biased region" description="Basic residues" evidence="6">
    <location>
        <begin position="790"/>
        <end position="799"/>
    </location>
</feature>
<feature type="compositionally biased region" description="Basic and acidic residues" evidence="6">
    <location>
        <begin position="809"/>
        <end position="826"/>
    </location>
</feature>
<feature type="modified residue" description="Phosphoserine" evidence="1">
    <location>
        <position position="278"/>
    </location>
</feature>
<feature type="modified residue" description="Phosphoserine" evidence="1">
    <location>
        <position position="397"/>
    </location>
</feature>
<feature type="modified residue" description="Phosphoserine" evidence="1">
    <location>
        <position position="800"/>
    </location>
</feature>
<feature type="splice variant" id="VSP_058683" description="In isoform 2.">
    <original>Q</original>
    <variation>QA</variation>
    <location>
        <position position="468"/>
    </location>
</feature>
<feature type="sequence conflict" description="In Ref. 4; BAE99012." evidence="9" ref="4">
    <original>E</original>
    <variation>G</variation>
    <location>
        <position position="776"/>
    </location>
</feature>
<proteinExistence type="evidence at protein level"/>
<comment type="function">
    <text evidence="7">E3 ubiquitin ligase acting as a negative regulator of oxidative stress tolerance, probably by mediating 26S proteasome-mediated degradation of PRMT13/PRMT4B, thus preventing APX1 and GPX1 accumulation via the reduction of histone H3 methylation (H3R17me2a). Confers sensitivity to cadmium CdCl(2) and salt NaCl stresses.</text>
</comment>
<comment type="catalytic activity">
    <reaction evidence="7">
        <text>S-ubiquitinyl-[E2 ubiquitin-conjugating enzyme]-L-cysteine + [acceptor protein]-L-lysine = [E2 ubiquitin-conjugating enzyme]-L-cysteine + N(6)-ubiquitinyl-[acceptor protein]-L-lysine.</text>
        <dbReference type="EC" id="2.3.2.27"/>
    </reaction>
</comment>
<comment type="subunit">
    <text evidence="7">Interacts with PRMT13/PRMT4B in the nucleus.</text>
</comment>
<comment type="subcellular location">
    <subcellularLocation>
        <location evidence="5 7">Nucleus</location>
    </subcellularLocation>
</comment>
<comment type="alternative products">
    <event type="alternative splicing"/>
    <isoform>
        <id>F4JP52-1</id>
        <name>1</name>
        <sequence type="displayed"/>
    </isoform>
    <isoform>
        <id>F4JP52-2</id>
        <name>2</name>
        <sequence type="described" ref="VSP_058683"/>
    </isoform>
</comment>
<comment type="tissue specificity">
    <text evidence="7">Expressed constitutively in both shoot and root tissues.</text>
</comment>
<comment type="induction">
    <text evidence="7">Repressed rapidly by oxidative stress such as paraquat, hydrogen peroxide H(2)O(2), mannitol, drought and cadmium ion CdCl(2).</text>
</comment>
<comment type="disruption phenotype">
    <text evidence="7">Increased tolerance to paraquat-triggered oxidative stress associated with PRMT13/PRMT4B, APX1 and GPX1 accumulation due to increased histone H3 methylation (H3R17me2a).</text>
</comment>
<comment type="sequence caution" evidence="9">
    <conflict type="erroneous gene model prediction">
        <sequence resource="EMBL-CDS" id="CAB10521"/>
    </conflict>
</comment>
<comment type="sequence caution" evidence="9">
    <conflict type="erroneous gene model prediction">
        <sequence resource="EMBL-CDS" id="CAB10522"/>
    </conflict>
</comment>
<comment type="sequence caution" evidence="9">
    <conflict type="erroneous gene model prediction">
        <sequence resource="EMBL-CDS" id="CAB78743"/>
    </conflict>
</comment>
<comment type="sequence caution" evidence="9">
    <conflict type="erroneous gene model prediction">
        <sequence resource="EMBL-CDS" id="CAB78744"/>
    </conflict>
</comment>
<dbReference type="EC" id="2.3.2.27" evidence="7"/>
<dbReference type="EMBL" id="Z97343">
    <property type="protein sequence ID" value="CAB10521.1"/>
    <property type="status" value="ALT_SEQ"/>
    <property type="molecule type" value="Genomic_DNA"/>
</dbReference>
<dbReference type="EMBL" id="Z97343">
    <property type="protein sequence ID" value="CAB10522.1"/>
    <property type="status" value="ALT_SEQ"/>
    <property type="molecule type" value="Genomic_DNA"/>
</dbReference>
<dbReference type="EMBL" id="AL161546">
    <property type="protein sequence ID" value="CAB78743.1"/>
    <property type="status" value="ALT_SEQ"/>
    <property type="molecule type" value="Genomic_DNA"/>
</dbReference>
<dbReference type="EMBL" id="AL161546">
    <property type="protein sequence ID" value="CAB78744.1"/>
    <property type="status" value="ALT_SEQ"/>
    <property type="molecule type" value="Genomic_DNA"/>
</dbReference>
<dbReference type="EMBL" id="CP002687">
    <property type="protein sequence ID" value="AEE83884.1"/>
    <property type="molecule type" value="Genomic_DNA"/>
</dbReference>
<dbReference type="EMBL" id="CP002687">
    <property type="protein sequence ID" value="AEE83885.1"/>
    <property type="molecule type" value="Genomic_DNA"/>
</dbReference>
<dbReference type="EMBL" id="CP002687">
    <property type="protein sequence ID" value="AEE83886.1"/>
    <property type="molecule type" value="Genomic_DNA"/>
</dbReference>
<dbReference type="EMBL" id="CP002687">
    <property type="protein sequence ID" value="ANM66691.1"/>
    <property type="molecule type" value="Genomic_DNA"/>
</dbReference>
<dbReference type="EMBL" id="AK226942">
    <property type="protein sequence ID" value="BAE99012.1"/>
    <property type="molecule type" value="mRNA"/>
</dbReference>
<dbReference type="PIR" id="D71443">
    <property type="entry name" value="D71443"/>
</dbReference>
<dbReference type="PIR" id="E71443">
    <property type="entry name" value="E71443"/>
</dbReference>
<dbReference type="RefSeq" id="NP_001190750.1">
    <molecule id="F4JP52-2"/>
    <property type="nucleotide sequence ID" value="NM_001203821.2"/>
</dbReference>
<dbReference type="RefSeq" id="NP_001190751.1">
    <molecule id="F4JP52-2"/>
    <property type="nucleotide sequence ID" value="NM_001203822.1"/>
</dbReference>
<dbReference type="RefSeq" id="NP_001328573.1">
    <molecule id="F4JP52-1"/>
    <property type="nucleotide sequence ID" value="NM_001341221.1"/>
</dbReference>
<dbReference type="RefSeq" id="NP_193471.2">
    <molecule id="F4JP52-1"/>
    <property type="nucleotide sequence ID" value="NM_117844.5"/>
</dbReference>
<dbReference type="SMR" id="F4JP52"/>
<dbReference type="FunCoup" id="F4JP52">
    <property type="interactions" value="673"/>
</dbReference>
<dbReference type="STRING" id="3702.F4JP52"/>
<dbReference type="iPTMnet" id="F4JP52"/>
<dbReference type="PaxDb" id="3702-AT4G17410.3"/>
<dbReference type="ProteomicsDB" id="234840">
    <molecule id="F4JP52-1"/>
</dbReference>
<dbReference type="EnsemblPlants" id="AT4G17410.1">
    <molecule id="F4JP52-1"/>
    <property type="protein sequence ID" value="AT4G17410.1"/>
    <property type="gene ID" value="AT4G17410"/>
</dbReference>
<dbReference type="EnsemblPlants" id="AT4G17410.2">
    <molecule id="F4JP52-2"/>
    <property type="protein sequence ID" value="AT4G17410.2"/>
    <property type="gene ID" value="AT4G17410"/>
</dbReference>
<dbReference type="EnsemblPlants" id="AT4G17410.3">
    <molecule id="F4JP52-2"/>
    <property type="protein sequence ID" value="AT4G17410.3"/>
    <property type="gene ID" value="AT4G17410"/>
</dbReference>
<dbReference type="EnsemblPlants" id="AT4G17410.5">
    <molecule id="F4JP52-1"/>
    <property type="protein sequence ID" value="AT4G17410.5"/>
    <property type="gene ID" value="AT4G17410"/>
</dbReference>
<dbReference type="GeneID" id="827452"/>
<dbReference type="Gramene" id="AT4G17410.1">
    <molecule id="F4JP52-1"/>
    <property type="protein sequence ID" value="AT4G17410.1"/>
    <property type="gene ID" value="AT4G17410"/>
</dbReference>
<dbReference type="Gramene" id="AT4G17410.2">
    <molecule id="F4JP52-2"/>
    <property type="protein sequence ID" value="AT4G17410.2"/>
    <property type="gene ID" value="AT4G17410"/>
</dbReference>
<dbReference type="Gramene" id="AT4G17410.3">
    <molecule id="F4JP52-2"/>
    <property type="protein sequence ID" value="AT4G17410.3"/>
    <property type="gene ID" value="AT4G17410"/>
</dbReference>
<dbReference type="Gramene" id="AT4G17410.5">
    <molecule id="F4JP52-1"/>
    <property type="protein sequence ID" value="AT4G17410.5"/>
    <property type="gene ID" value="AT4G17410"/>
</dbReference>
<dbReference type="KEGG" id="ath:AT4G17410"/>
<dbReference type="Araport" id="AT4G17410"/>
<dbReference type="TAIR" id="AT4G17410">
    <property type="gene designation" value="PQT3"/>
</dbReference>
<dbReference type="eggNOG" id="KOG0314">
    <property type="taxonomic scope" value="Eukaryota"/>
</dbReference>
<dbReference type="InParanoid" id="F4JP52"/>
<dbReference type="OMA" id="RSKGERW"/>
<dbReference type="PRO" id="PR:F4JP52"/>
<dbReference type="Proteomes" id="UP000006548">
    <property type="component" value="Chromosome 4"/>
</dbReference>
<dbReference type="ExpressionAtlas" id="F4JP52">
    <property type="expression patterns" value="baseline and differential"/>
</dbReference>
<dbReference type="GO" id="GO:0005634">
    <property type="term" value="C:nucleus"/>
    <property type="evidence" value="ECO:0000314"/>
    <property type="project" value="UniProtKB"/>
</dbReference>
<dbReference type="GO" id="GO:0061630">
    <property type="term" value="F:ubiquitin protein ligase activity"/>
    <property type="evidence" value="ECO:0000314"/>
    <property type="project" value="UniProtKB"/>
</dbReference>
<dbReference type="GO" id="GO:0061659">
    <property type="term" value="F:ubiquitin-like protein ligase activity"/>
    <property type="evidence" value="ECO:0000314"/>
    <property type="project" value="TAIR"/>
</dbReference>
<dbReference type="GO" id="GO:0008270">
    <property type="term" value="F:zinc ion binding"/>
    <property type="evidence" value="ECO:0007669"/>
    <property type="project" value="UniProtKB-KW"/>
</dbReference>
<dbReference type="GO" id="GO:0072756">
    <property type="term" value="P:cellular response to paraquat"/>
    <property type="evidence" value="ECO:0000315"/>
    <property type="project" value="UniProtKB"/>
</dbReference>
<dbReference type="GO" id="GO:0006397">
    <property type="term" value="P:mRNA processing"/>
    <property type="evidence" value="ECO:0007669"/>
    <property type="project" value="InterPro"/>
</dbReference>
<dbReference type="GO" id="GO:1902883">
    <property type="term" value="P:negative regulation of response to oxidative stress"/>
    <property type="evidence" value="ECO:0000315"/>
    <property type="project" value="UniProtKB"/>
</dbReference>
<dbReference type="GO" id="GO:0032436">
    <property type="term" value="P:positive regulation of proteasomal ubiquitin-dependent protein catabolic process"/>
    <property type="evidence" value="ECO:0000315"/>
    <property type="project" value="UniProtKB"/>
</dbReference>
<dbReference type="GO" id="GO:1902884">
    <property type="term" value="P:positive regulation of response to oxidative stress"/>
    <property type="evidence" value="ECO:0000315"/>
    <property type="project" value="TAIR"/>
</dbReference>
<dbReference type="GO" id="GO:0016567">
    <property type="term" value="P:protein ubiquitination"/>
    <property type="evidence" value="ECO:0000314"/>
    <property type="project" value="TAIR"/>
</dbReference>
<dbReference type="GO" id="GO:0046686">
    <property type="term" value="P:response to cadmium ion"/>
    <property type="evidence" value="ECO:0000270"/>
    <property type="project" value="UniProtKB"/>
</dbReference>
<dbReference type="GO" id="GO:0042542">
    <property type="term" value="P:response to hydrogen peroxide"/>
    <property type="evidence" value="ECO:0000270"/>
    <property type="project" value="UniProtKB"/>
</dbReference>
<dbReference type="GO" id="GO:0010555">
    <property type="term" value="P:response to mannitol"/>
    <property type="evidence" value="ECO:0000270"/>
    <property type="project" value="UniProtKB"/>
</dbReference>
<dbReference type="GO" id="GO:0006979">
    <property type="term" value="P:response to oxidative stress"/>
    <property type="evidence" value="ECO:0000270"/>
    <property type="project" value="UniProtKB"/>
</dbReference>
<dbReference type="GO" id="GO:1901562">
    <property type="term" value="P:response to paraquat"/>
    <property type="evidence" value="ECO:0000270"/>
    <property type="project" value="UniProtKB"/>
</dbReference>
<dbReference type="GO" id="GO:0009651">
    <property type="term" value="P:response to salt stress"/>
    <property type="evidence" value="ECO:0000315"/>
    <property type="project" value="UniProtKB"/>
</dbReference>
<dbReference type="GO" id="GO:0009414">
    <property type="term" value="P:response to water deprivation"/>
    <property type="evidence" value="ECO:0000270"/>
    <property type="project" value="UniProtKB"/>
</dbReference>
<dbReference type="CDD" id="cd16620">
    <property type="entry name" value="vRING-HC-C4C4_RBBP6"/>
    <property type="match status" value="1"/>
</dbReference>
<dbReference type="FunFam" id="3.30.40.10:FF:001209">
    <property type="entry name" value="DWNN domain, a CCHC-type zinc finger"/>
    <property type="match status" value="1"/>
</dbReference>
<dbReference type="Gene3D" id="3.10.20.90">
    <property type="entry name" value="Phosphatidylinositol 3-kinase Catalytic Subunit, Chain A, domain 1"/>
    <property type="match status" value="1"/>
</dbReference>
<dbReference type="Gene3D" id="4.10.60.10">
    <property type="entry name" value="Zinc finger, CCHC-type"/>
    <property type="match status" value="1"/>
</dbReference>
<dbReference type="Gene3D" id="3.30.40.10">
    <property type="entry name" value="Zinc/RING finger domain, C3HC4 (zinc finger)"/>
    <property type="match status" value="1"/>
</dbReference>
<dbReference type="InterPro" id="IPR014891">
    <property type="entry name" value="DWNN_domain"/>
</dbReference>
<dbReference type="InterPro" id="IPR033489">
    <property type="entry name" value="RBBP6"/>
</dbReference>
<dbReference type="InterPro" id="IPR025829">
    <property type="entry name" value="Zn_knuckle_CX2CX3GHX4C"/>
</dbReference>
<dbReference type="InterPro" id="IPR013083">
    <property type="entry name" value="Znf_RING/FYVE/PHD"/>
</dbReference>
<dbReference type="PANTHER" id="PTHR15439:SF0">
    <property type="entry name" value="CELL DIVISION CYCLE AND APOPTOSIS REGULATOR PROTEIN 1-RELATED"/>
    <property type="match status" value="1"/>
</dbReference>
<dbReference type="PANTHER" id="PTHR15439">
    <property type="entry name" value="RETINOBLASTOMA-BINDING PROTEIN 6"/>
    <property type="match status" value="1"/>
</dbReference>
<dbReference type="Pfam" id="PF08783">
    <property type="entry name" value="DWNN"/>
    <property type="match status" value="1"/>
</dbReference>
<dbReference type="Pfam" id="PF13696">
    <property type="entry name" value="zf-CCHC_2"/>
    <property type="match status" value="1"/>
</dbReference>
<dbReference type="SMART" id="SM01180">
    <property type="entry name" value="DWNN"/>
    <property type="match status" value="1"/>
</dbReference>
<dbReference type="SUPFAM" id="SSF57850">
    <property type="entry name" value="RING/U-box"/>
    <property type="match status" value="1"/>
</dbReference>
<dbReference type="PROSITE" id="PS51282">
    <property type="entry name" value="DWNN"/>
    <property type="match status" value="1"/>
</dbReference>
<sequence>MAIYYKFKSARDYDTISMDGPFITVGLLKEKIYETKHLGSGKDLDIVISNAQTNEEYLDEAMLIPKNTSVLIRRVPGRPRIRIITREEPRVEDKVENVQADMNNVITADASPVEDEFDEFGNDLYSIPDAPAVHSNNLCHDSAPADDEETKLKALIDTPALDWHQQGADSFGPGRGYGRGMAGRMGGRGFGMERTTPPPGYVCHRCNVSGHFIQHCSTNGNPNFDVKRVKPPTGIPKSMLMATPNGSYSLPSGAVAVLKPNEDAFEKEMEGLTSTTRSVGEFPPELKCPLCKEVMRDAALASKCCLKSYCDKCIRDHIIAKSMCVCGATHVLADDLLPNKTLRDTINRILESGNSSAENAGSMCQVQDMESVRCPPPKALSPTTSAASGGEKKPAPSNNNETSTLKPSIEIAEITSAWASAEIVKVEKPVDASANIQGSSNGKEAAVSQLNTQPPKEEMPQQVASGEQGKRKKKKPRMSGTDLAGPDYMMPMGPGPGNQYFNGFQPGFNGVQHGFNGVQPGFNGFHHGFNGFPGPFPGAMPPFVGYGFGGVIHPDPFAAQGFGFPNIPPPYRDLAEMGNRMNLQHPIMGREEFEAKKTEMKRKRENEIRRSEGGNVVRDSEKSRIMNNSAVTSSPVKPKSRQGPPPPISSDYDRRRRSDRSSPERQSSRRFTSPPRSSSRKSERDRHHDLDSEHDRRRDRPRETDRKHRKRSEKSSSDPTVEIDDNNKSNVFTRISFPEESSGKQRKTSKSSPAPPESSVAPVSSGRRHHSRREREMVEYDSSDDEDRHFKRKPSRYKRSPSVAPSDAGDEHFRHSKRSKGERARA</sequence>
<evidence type="ECO:0000250" key="1">
    <source>
        <dbReference type="UniProtKB" id="B9DFV2"/>
    </source>
</evidence>
<evidence type="ECO:0000255" key="2">
    <source>
        <dbReference type="PROSITE-ProRule" id="PRU00047"/>
    </source>
</evidence>
<evidence type="ECO:0000255" key="3">
    <source>
        <dbReference type="PROSITE-ProRule" id="PRU00175"/>
    </source>
</evidence>
<evidence type="ECO:0000255" key="4">
    <source>
        <dbReference type="PROSITE-ProRule" id="PRU00612"/>
    </source>
</evidence>
<evidence type="ECO:0000255" key="5">
    <source>
        <dbReference type="PROSITE-ProRule" id="PRU00768"/>
    </source>
</evidence>
<evidence type="ECO:0000256" key="6">
    <source>
        <dbReference type="SAM" id="MobiDB-lite"/>
    </source>
</evidence>
<evidence type="ECO:0000269" key="7">
    <source>
    </source>
</evidence>
<evidence type="ECO:0000303" key="8">
    <source>
    </source>
</evidence>
<evidence type="ECO:0000305" key="9"/>
<evidence type="ECO:0000312" key="10">
    <source>
        <dbReference type="Araport" id="AT4G17410"/>
    </source>
</evidence>
<evidence type="ECO:0000312" key="11">
    <source>
        <dbReference type="EMBL" id="CAB10521.1"/>
    </source>
</evidence>
<evidence type="ECO:0000312" key="12">
    <source>
        <dbReference type="EMBL" id="CAB78743.1"/>
    </source>
</evidence>
<organism>
    <name type="scientific">Arabidopsis thaliana</name>
    <name type="common">Mouse-ear cress</name>
    <dbReference type="NCBI Taxonomy" id="3702"/>
    <lineage>
        <taxon>Eukaryota</taxon>
        <taxon>Viridiplantae</taxon>
        <taxon>Streptophyta</taxon>
        <taxon>Embryophyta</taxon>
        <taxon>Tracheophyta</taxon>
        <taxon>Spermatophyta</taxon>
        <taxon>Magnoliopsida</taxon>
        <taxon>eudicotyledons</taxon>
        <taxon>Gunneridae</taxon>
        <taxon>Pentapetalae</taxon>
        <taxon>rosids</taxon>
        <taxon>malvids</taxon>
        <taxon>Brassicales</taxon>
        <taxon>Brassicaceae</taxon>
        <taxon>Camelineae</taxon>
        <taxon>Arabidopsis</taxon>
    </lineage>
</organism>
<gene>
    <name evidence="8" type="primary">PQT3</name>
    <name evidence="10" type="ordered locus">At4g17410</name>
    <name evidence="11" type="ORF">dl4740w</name>
    <name evidence="12" type="ORF">FCAALL.426</name>
</gene>
<name>PQT3_ARATH</name>
<reference key="1">
    <citation type="journal article" date="1998" name="Nature">
        <title>Analysis of 1.9 Mb of contiguous sequence from chromosome 4 of Arabidopsis thaliana.</title>
        <authorList>
            <person name="Bevan M."/>
            <person name="Bancroft I."/>
            <person name="Bent E."/>
            <person name="Love K."/>
            <person name="Goodman H.M."/>
            <person name="Dean C."/>
            <person name="Bergkamp R."/>
            <person name="Dirkse W."/>
            <person name="van Staveren M."/>
            <person name="Stiekema W."/>
            <person name="Drost L."/>
            <person name="Ridley P."/>
            <person name="Hudson S.-A."/>
            <person name="Patel K."/>
            <person name="Murphy G."/>
            <person name="Piffanelli P."/>
            <person name="Wedler H."/>
            <person name="Wedler E."/>
            <person name="Wambutt R."/>
            <person name="Weitzenegger T."/>
            <person name="Pohl T."/>
            <person name="Terryn N."/>
            <person name="Gielen J."/>
            <person name="Villarroel R."/>
            <person name="De Clercq R."/>
            <person name="van Montagu M."/>
            <person name="Lecharny A."/>
            <person name="Aubourg S."/>
            <person name="Gy I."/>
            <person name="Kreis M."/>
            <person name="Lao N."/>
            <person name="Kavanagh T."/>
            <person name="Hempel S."/>
            <person name="Kotter P."/>
            <person name="Entian K.-D."/>
            <person name="Rieger M."/>
            <person name="Schaefer M."/>
            <person name="Funk B."/>
            <person name="Mueller-Auer S."/>
            <person name="Silvey M."/>
            <person name="James R."/>
            <person name="Monfort A."/>
            <person name="Pons A."/>
            <person name="Puigdomenech P."/>
            <person name="Douka A."/>
            <person name="Voukelatou E."/>
            <person name="Milioni D."/>
            <person name="Hatzopoulos P."/>
            <person name="Piravandi E."/>
            <person name="Obermaier B."/>
            <person name="Hilbert H."/>
            <person name="Duesterhoeft A."/>
            <person name="Moores T."/>
            <person name="Jones J.D.G."/>
            <person name="Eneva T."/>
            <person name="Palme K."/>
            <person name="Benes V."/>
            <person name="Rechmann S."/>
            <person name="Ansorge W."/>
            <person name="Cooke R."/>
            <person name="Berger C."/>
            <person name="Delseny M."/>
            <person name="Voet M."/>
            <person name="Volckaert G."/>
            <person name="Mewes H.-W."/>
            <person name="Klosterman S."/>
            <person name="Schueller C."/>
            <person name="Chalwatzis N."/>
        </authorList>
    </citation>
    <scope>NUCLEOTIDE SEQUENCE [LARGE SCALE GENOMIC DNA]</scope>
    <source>
        <strain>cv. Columbia</strain>
    </source>
</reference>
<reference key="2">
    <citation type="journal article" date="1999" name="Nature">
        <title>Sequence and analysis of chromosome 4 of the plant Arabidopsis thaliana.</title>
        <authorList>
            <person name="Mayer K.F.X."/>
            <person name="Schueller C."/>
            <person name="Wambutt R."/>
            <person name="Murphy G."/>
            <person name="Volckaert G."/>
            <person name="Pohl T."/>
            <person name="Duesterhoeft A."/>
            <person name="Stiekema W."/>
            <person name="Entian K.-D."/>
            <person name="Terryn N."/>
            <person name="Harris B."/>
            <person name="Ansorge W."/>
            <person name="Brandt P."/>
            <person name="Grivell L.A."/>
            <person name="Rieger M."/>
            <person name="Weichselgartner M."/>
            <person name="de Simone V."/>
            <person name="Obermaier B."/>
            <person name="Mache R."/>
            <person name="Mueller M."/>
            <person name="Kreis M."/>
            <person name="Delseny M."/>
            <person name="Puigdomenech P."/>
            <person name="Watson M."/>
            <person name="Schmidtheini T."/>
            <person name="Reichert B."/>
            <person name="Portetelle D."/>
            <person name="Perez-Alonso M."/>
            <person name="Boutry M."/>
            <person name="Bancroft I."/>
            <person name="Vos P."/>
            <person name="Hoheisel J."/>
            <person name="Zimmermann W."/>
            <person name="Wedler H."/>
            <person name="Ridley P."/>
            <person name="Langham S.-A."/>
            <person name="McCullagh B."/>
            <person name="Bilham L."/>
            <person name="Robben J."/>
            <person name="van der Schueren J."/>
            <person name="Grymonprez B."/>
            <person name="Chuang Y.-J."/>
            <person name="Vandenbussche F."/>
            <person name="Braeken M."/>
            <person name="Weltjens I."/>
            <person name="Voet M."/>
            <person name="Bastiaens I."/>
            <person name="Aert R."/>
            <person name="Defoor E."/>
            <person name="Weitzenegger T."/>
            <person name="Bothe G."/>
            <person name="Ramsperger U."/>
            <person name="Hilbert H."/>
            <person name="Braun M."/>
            <person name="Holzer E."/>
            <person name="Brandt A."/>
            <person name="Peters S."/>
            <person name="van Staveren M."/>
            <person name="Dirkse W."/>
            <person name="Mooijman P."/>
            <person name="Klein Lankhorst R."/>
            <person name="Rose M."/>
            <person name="Hauf J."/>
            <person name="Koetter P."/>
            <person name="Berneiser S."/>
            <person name="Hempel S."/>
            <person name="Feldpausch M."/>
            <person name="Lamberth S."/>
            <person name="Van den Daele H."/>
            <person name="De Keyser A."/>
            <person name="Buysshaert C."/>
            <person name="Gielen J."/>
            <person name="Villarroel R."/>
            <person name="De Clercq R."/>
            <person name="van Montagu M."/>
            <person name="Rogers J."/>
            <person name="Cronin A."/>
            <person name="Quail M.A."/>
            <person name="Bray-Allen S."/>
            <person name="Clark L."/>
            <person name="Doggett J."/>
            <person name="Hall S."/>
            <person name="Kay M."/>
            <person name="Lennard N."/>
            <person name="McLay K."/>
            <person name="Mayes R."/>
            <person name="Pettett A."/>
            <person name="Rajandream M.A."/>
            <person name="Lyne M."/>
            <person name="Benes V."/>
            <person name="Rechmann S."/>
            <person name="Borkova D."/>
            <person name="Bloecker H."/>
            <person name="Scharfe M."/>
            <person name="Grimm M."/>
            <person name="Loehnert T.-H."/>
            <person name="Dose S."/>
            <person name="de Haan M."/>
            <person name="Maarse A.C."/>
            <person name="Schaefer M."/>
            <person name="Mueller-Auer S."/>
            <person name="Gabel C."/>
            <person name="Fuchs M."/>
            <person name="Fartmann B."/>
            <person name="Granderath K."/>
            <person name="Dauner D."/>
            <person name="Herzl A."/>
            <person name="Neumann S."/>
            <person name="Argiriou A."/>
            <person name="Vitale D."/>
            <person name="Liguori R."/>
            <person name="Piravandi E."/>
            <person name="Massenet O."/>
            <person name="Quigley F."/>
            <person name="Clabauld G."/>
            <person name="Muendlein A."/>
            <person name="Felber R."/>
            <person name="Schnabl S."/>
            <person name="Hiller R."/>
            <person name="Schmidt W."/>
            <person name="Lecharny A."/>
            <person name="Aubourg S."/>
            <person name="Chefdor F."/>
            <person name="Cooke R."/>
            <person name="Berger C."/>
            <person name="Monfort A."/>
            <person name="Casacuberta E."/>
            <person name="Gibbons T."/>
            <person name="Weber N."/>
            <person name="Vandenbol M."/>
            <person name="Bargues M."/>
            <person name="Terol J."/>
            <person name="Torres A."/>
            <person name="Perez-Perez A."/>
            <person name="Purnelle B."/>
            <person name="Bent E."/>
            <person name="Johnson S."/>
            <person name="Tacon D."/>
            <person name="Jesse T."/>
            <person name="Heijnen L."/>
            <person name="Schwarz S."/>
            <person name="Scholler P."/>
            <person name="Heber S."/>
            <person name="Francs P."/>
            <person name="Bielke C."/>
            <person name="Frishman D."/>
            <person name="Haase D."/>
            <person name="Lemcke K."/>
            <person name="Mewes H.-W."/>
            <person name="Stocker S."/>
            <person name="Zaccaria P."/>
            <person name="Bevan M."/>
            <person name="Wilson R.K."/>
            <person name="de la Bastide M."/>
            <person name="Habermann K."/>
            <person name="Parnell L."/>
            <person name="Dedhia N."/>
            <person name="Gnoj L."/>
            <person name="Schutz K."/>
            <person name="Huang E."/>
            <person name="Spiegel L."/>
            <person name="Sekhon M."/>
            <person name="Murray J."/>
            <person name="Sheet P."/>
            <person name="Cordes M."/>
            <person name="Abu-Threideh J."/>
            <person name="Stoneking T."/>
            <person name="Kalicki J."/>
            <person name="Graves T."/>
            <person name="Harmon G."/>
            <person name="Edwards J."/>
            <person name="Latreille P."/>
            <person name="Courtney L."/>
            <person name="Cloud J."/>
            <person name="Abbott A."/>
            <person name="Scott K."/>
            <person name="Johnson D."/>
            <person name="Minx P."/>
            <person name="Bentley D."/>
            <person name="Fulton B."/>
            <person name="Miller N."/>
            <person name="Greco T."/>
            <person name="Kemp K."/>
            <person name="Kramer J."/>
            <person name="Fulton L."/>
            <person name="Mardis E."/>
            <person name="Dante M."/>
            <person name="Pepin K."/>
            <person name="Hillier L.W."/>
            <person name="Nelson J."/>
            <person name="Spieth J."/>
            <person name="Ryan E."/>
            <person name="Andrews S."/>
            <person name="Geisel C."/>
            <person name="Layman D."/>
            <person name="Du H."/>
            <person name="Ali J."/>
            <person name="Berghoff A."/>
            <person name="Jones K."/>
            <person name="Drone K."/>
            <person name="Cotton M."/>
            <person name="Joshu C."/>
            <person name="Antonoiu B."/>
            <person name="Zidanic M."/>
            <person name="Strong C."/>
            <person name="Sun H."/>
            <person name="Lamar B."/>
            <person name="Yordan C."/>
            <person name="Ma P."/>
            <person name="Zhong J."/>
            <person name="Preston R."/>
            <person name="Vil D."/>
            <person name="Shekher M."/>
            <person name="Matero A."/>
            <person name="Shah R."/>
            <person name="Swaby I.K."/>
            <person name="O'Shaughnessy A."/>
            <person name="Rodriguez M."/>
            <person name="Hoffman J."/>
            <person name="Till S."/>
            <person name="Granat S."/>
            <person name="Shohdy N."/>
            <person name="Hasegawa A."/>
            <person name="Hameed A."/>
            <person name="Lodhi M."/>
            <person name="Johnson A."/>
            <person name="Chen E."/>
            <person name="Marra M.A."/>
            <person name="Martienssen R."/>
            <person name="McCombie W.R."/>
        </authorList>
    </citation>
    <scope>NUCLEOTIDE SEQUENCE [LARGE SCALE GENOMIC DNA]</scope>
    <source>
        <strain>cv. Columbia</strain>
    </source>
</reference>
<reference key="3">
    <citation type="journal article" date="2017" name="Plant J.">
        <title>Araport11: a complete reannotation of the Arabidopsis thaliana reference genome.</title>
        <authorList>
            <person name="Cheng C.Y."/>
            <person name="Krishnakumar V."/>
            <person name="Chan A.P."/>
            <person name="Thibaud-Nissen F."/>
            <person name="Schobel S."/>
            <person name="Town C.D."/>
        </authorList>
    </citation>
    <scope>GENOME REANNOTATION</scope>
    <source>
        <strain>cv. Columbia</strain>
    </source>
</reference>
<reference key="4">
    <citation type="submission" date="2006-07" db="EMBL/GenBank/DDBJ databases">
        <title>Large-scale analysis of RIKEN Arabidopsis full-length (RAFL) cDNAs.</title>
        <authorList>
            <person name="Totoki Y."/>
            <person name="Seki M."/>
            <person name="Ishida J."/>
            <person name="Nakajima M."/>
            <person name="Enju A."/>
            <person name="Kamiya A."/>
            <person name="Narusaka M."/>
            <person name="Shin-i T."/>
            <person name="Nakagawa M."/>
            <person name="Sakamoto N."/>
            <person name="Oishi K."/>
            <person name="Kohara Y."/>
            <person name="Kobayashi M."/>
            <person name="Toyoda A."/>
            <person name="Sakaki Y."/>
            <person name="Sakurai T."/>
            <person name="Iida K."/>
            <person name="Akiyama K."/>
            <person name="Satou M."/>
            <person name="Toyoda T."/>
            <person name="Konagaya A."/>
            <person name="Carninci P."/>
            <person name="Kawai J."/>
            <person name="Hayashizaki Y."/>
            <person name="Shinozaki K."/>
        </authorList>
    </citation>
    <scope>NUCLEOTIDE SEQUENCE [LARGE SCALE MRNA] (ISOFORM 1)</scope>
    <source>
        <strain>cv. Columbia</strain>
    </source>
</reference>
<reference key="5">
    <citation type="journal article" date="2009" name="J. Proteomics">
        <title>Phosphoproteomic analysis of nuclei-enriched fractions from Arabidopsis thaliana.</title>
        <authorList>
            <person name="Jones A.M.E."/>
            <person name="MacLean D."/>
            <person name="Studholme D.J."/>
            <person name="Serna-Sanz A."/>
            <person name="Andreasson E."/>
            <person name="Rathjen J.P."/>
            <person name="Peck S.C."/>
        </authorList>
    </citation>
    <scope>IDENTIFICATION BY MASS SPECTROMETRY [LARGE SCALE ANALYSIS]</scope>
    <source>
        <strain>cv. Columbia</strain>
    </source>
</reference>
<reference key="6">
    <citation type="journal article" date="2016" name="PLoS Genet.">
        <title>PARAQUAT TOLERANCE3 is an E3 ligase that switches off activated oxidative response by targeting histone-modifying PROTEIN METHYLTRANSFERASE4b.</title>
        <authorList>
            <person name="Luo C."/>
            <person name="Cai X.-T."/>
            <person name="Du J."/>
            <person name="Zhao T.-L."/>
            <person name="Wang P.-F."/>
            <person name="Zhao P.-X."/>
            <person name="Liu R."/>
            <person name="Xie Q."/>
            <person name="Cao X.-F."/>
            <person name="Xiang C.-B."/>
        </authorList>
    </citation>
    <scope>FUNCTION</scope>
    <scope>DISRUPTION PHENOTYPE</scope>
    <scope>INTERACTION WITH PRMT13/PRMT4B</scope>
    <scope>REPRESSION BY OXIDATIVE STRESS</scope>
    <scope>CATALYTIC ACTIVITY</scope>
    <scope>TISSUE SPECIFICITY</scope>
    <scope>SUBCELLULAR LOCATION</scope>
    <source>
        <strain>cv. Columbia</strain>
    </source>
</reference>
<protein>
    <recommendedName>
        <fullName evidence="8">E3 ubiquitin ligase PARAQUAT TOLERANCE 3</fullName>
        <ecNumber evidence="7">2.3.2.27</ecNumber>
    </recommendedName>
</protein>